<reference key="1">
    <citation type="journal article" date="2002" name="Nature">
        <title>Genome sequence of the plant pathogen Ralstonia solanacearum.</title>
        <authorList>
            <person name="Salanoubat M."/>
            <person name="Genin S."/>
            <person name="Artiguenave F."/>
            <person name="Gouzy J."/>
            <person name="Mangenot S."/>
            <person name="Arlat M."/>
            <person name="Billault A."/>
            <person name="Brottier P."/>
            <person name="Camus J.-C."/>
            <person name="Cattolico L."/>
            <person name="Chandler M."/>
            <person name="Choisne N."/>
            <person name="Claudel-Renard C."/>
            <person name="Cunnac S."/>
            <person name="Demange N."/>
            <person name="Gaspin C."/>
            <person name="Lavie M."/>
            <person name="Moisan A."/>
            <person name="Robert C."/>
            <person name="Saurin W."/>
            <person name="Schiex T."/>
            <person name="Siguier P."/>
            <person name="Thebault P."/>
            <person name="Whalen M."/>
            <person name="Wincker P."/>
            <person name="Levy M."/>
            <person name="Weissenbach J."/>
            <person name="Boucher C.A."/>
        </authorList>
    </citation>
    <scope>NUCLEOTIDE SEQUENCE [LARGE SCALE GENOMIC DNA]</scope>
    <source>
        <strain>ATCC BAA-1114 / GMI1000</strain>
    </source>
</reference>
<accession>Q8Y1B3</accession>
<organism>
    <name type="scientific">Ralstonia nicotianae (strain ATCC BAA-1114 / GMI1000)</name>
    <name type="common">Ralstonia solanacearum</name>
    <dbReference type="NCBI Taxonomy" id="267608"/>
    <lineage>
        <taxon>Bacteria</taxon>
        <taxon>Pseudomonadati</taxon>
        <taxon>Pseudomonadota</taxon>
        <taxon>Betaproteobacteria</taxon>
        <taxon>Burkholderiales</taxon>
        <taxon>Burkholderiaceae</taxon>
        <taxon>Ralstonia</taxon>
        <taxon>Ralstonia solanacearum species complex</taxon>
    </lineage>
</organism>
<comment type="function">
    <text evidence="1">Oxygen-binding protein. May be involved in a storage mechanism or for delivery to oxygen-requiring enzymes. The oxygen-binding site contains two iron atoms.</text>
</comment>
<comment type="subunit">
    <text evidence="1">Monomer.</text>
</comment>
<comment type="similarity">
    <text evidence="1">Belongs to the hemerythrin family.</text>
</comment>
<gene>
    <name type="ordered locus">RSc0777</name>
    <name type="ORF">RS05077</name>
</gene>
<dbReference type="EMBL" id="AL646052">
    <property type="protein sequence ID" value="CAD14479.1"/>
    <property type="molecule type" value="Genomic_DNA"/>
</dbReference>
<dbReference type="RefSeq" id="WP_011000731.1">
    <property type="nucleotide sequence ID" value="NC_003295.1"/>
</dbReference>
<dbReference type="SMR" id="Q8Y1B3"/>
<dbReference type="STRING" id="267608.RSc0777"/>
<dbReference type="EnsemblBacteria" id="CAD14479">
    <property type="protein sequence ID" value="CAD14479"/>
    <property type="gene ID" value="RSc0777"/>
</dbReference>
<dbReference type="KEGG" id="rso:RSc0777"/>
<dbReference type="eggNOG" id="COG2703">
    <property type="taxonomic scope" value="Bacteria"/>
</dbReference>
<dbReference type="HOGENOM" id="CLU_086902_1_0_4"/>
<dbReference type="Proteomes" id="UP000001436">
    <property type="component" value="Chromosome"/>
</dbReference>
<dbReference type="GO" id="GO:0005506">
    <property type="term" value="F:iron ion binding"/>
    <property type="evidence" value="ECO:0007669"/>
    <property type="project" value="UniProtKB-UniRule"/>
</dbReference>
<dbReference type="GO" id="GO:0005344">
    <property type="term" value="F:oxygen carrier activity"/>
    <property type="evidence" value="ECO:0007669"/>
    <property type="project" value="UniProtKB-UniRule"/>
</dbReference>
<dbReference type="CDD" id="cd12107">
    <property type="entry name" value="Hemerythrin"/>
    <property type="match status" value="1"/>
</dbReference>
<dbReference type="Gene3D" id="1.20.120.50">
    <property type="entry name" value="Hemerythrin-like"/>
    <property type="match status" value="1"/>
</dbReference>
<dbReference type="HAMAP" id="MF_00556">
    <property type="entry name" value="Hemerythrin"/>
    <property type="match status" value="1"/>
</dbReference>
<dbReference type="InterPro" id="IPR023504">
    <property type="entry name" value="Bacteriohemerythrin-like"/>
</dbReference>
<dbReference type="InterPro" id="IPR016131">
    <property type="entry name" value="Haemerythrin_Fe_BS"/>
</dbReference>
<dbReference type="InterPro" id="IPR050669">
    <property type="entry name" value="Hemerythrin"/>
</dbReference>
<dbReference type="InterPro" id="IPR012312">
    <property type="entry name" value="Hemerythrin-like"/>
</dbReference>
<dbReference type="InterPro" id="IPR035938">
    <property type="entry name" value="Hemerythrin-like_sf"/>
</dbReference>
<dbReference type="InterPro" id="IPR012827">
    <property type="entry name" value="Hemerythrin_metal-bd"/>
</dbReference>
<dbReference type="NCBIfam" id="TIGR02481">
    <property type="entry name" value="hemeryth_dom"/>
    <property type="match status" value="1"/>
</dbReference>
<dbReference type="NCBIfam" id="NF002522">
    <property type="entry name" value="PRK01917.1"/>
    <property type="match status" value="1"/>
</dbReference>
<dbReference type="PANTHER" id="PTHR37164">
    <property type="entry name" value="BACTERIOHEMERYTHRIN"/>
    <property type="match status" value="1"/>
</dbReference>
<dbReference type="PANTHER" id="PTHR37164:SF1">
    <property type="entry name" value="BACTERIOHEMERYTHRIN"/>
    <property type="match status" value="1"/>
</dbReference>
<dbReference type="Pfam" id="PF01814">
    <property type="entry name" value="Hemerythrin"/>
    <property type="match status" value="1"/>
</dbReference>
<dbReference type="SUPFAM" id="SSF47188">
    <property type="entry name" value="Hemerythrin-like"/>
    <property type="match status" value="1"/>
</dbReference>
<dbReference type="PROSITE" id="PS00550">
    <property type="entry name" value="HEMERYTHRINS"/>
    <property type="match status" value="1"/>
</dbReference>
<sequence>MPVIQWSEALHLGDAATDANHAAFCTLLNAVADASEADFVSALDAFIAHTEVHFAEENAWMEAADFPPLHCHRNEHDNVLALCREVRRRAADGDMALGRRLVTELPEWFAQHVDVMDRMMTTWLAQRGPDAREEAAA</sequence>
<proteinExistence type="inferred from homology"/>
<evidence type="ECO:0000255" key="1">
    <source>
        <dbReference type="HAMAP-Rule" id="MF_00556"/>
    </source>
</evidence>
<keyword id="KW-0408">Iron</keyword>
<keyword id="KW-0479">Metal-binding</keyword>
<keyword id="KW-0561">Oxygen transport</keyword>
<keyword id="KW-1185">Reference proteome</keyword>
<keyword id="KW-0813">Transport</keyword>
<name>HEMTB_RALN1</name>
<protein>
    <recommendedName>
        <fullName evidence="1">Bacteriohemerythrin</fullName>
    </recommendedName>
</protein>
<feature type="chain" id="PRO_0000191849" description="Bacteriohemerythrin">
    <location>
        <begin position="1"/>
        <end position="137"/>
    </location>
</feature>
<feature type="binding site" evidence="1">
    <location>
        <position position="21"/>
    </location>
    <ligand>
        <name>Fe cation</name>
        <dbReference type="ChEBI" id="CHEBI:24875"/>
        <label>1</label>
    </ligand>
</feature>
<feature type="binding site" evidence="1">
    <location>
        <position position="53"/>
    </location>
    <ligand>
        <name>Fe cation</name>
        <dbReference type="ChEBI" id="CHEBI:24875"/>
        <label>1</label>
    </ligand>
</feature>
<feature type="binding site" evidence="1">
    <location>
        <position position="57"/>
    </location>
    <ligand>
        <name>Fe cation</name>
        <dbReference type="ChEBI" id="CHEBI:24875"/>
        <label>1</label>
    </ligand>
</feature>
<feature type="binding site" evidence="1">
    <location>
        <position position="57"/>
    </location>
    <ligand>
        <name>Fe cation</name>
        <dbReference type="ChEBI" id="CHEBI:24875"/>
        <label>2</label>
    </ligand>
</feature>
<feature type="binding site" evidence="1">
    <location>
        <position position="72"/>
    </location>
    <ligand>
        <name>Fe cation</name>
        <dbReference type="ChEBI" id="CHEBI:24875"/>
        <label>2</label>
    </ligand>
</feature>
<feature type="binding site" evidence="1">
    <location>
        <position position="76"/>
    </location>
    <ligand>
        <name>Fe cation</name>
        <dbReference type="ChEBI" id="CHEBI:24875"/>
        <label>2</label>
    </ligand>
</feature>
<feature type="binding site" evidence="1">
    <location>
        <position position="112"/>
    </location>
    <ligand>
        <name>Fe cation</name>
        <dbReference type="ChEBI" id="CHEBI:24875"/>
        <label>2</label>
    </ligand>
</feature>
<feature type="binding site" evidence="1">
    <location>
        <position position="117"/>
    </location>
    <ligand>
        <name>Fe cation</name>
        <dbReference type="ChEBI" id="CHEBI:24875"/>
        <label>1</label>
    </ligand>
</feature>
<feature type="binding site" evidence="1">
    <location>
        <position position="117"/>
    </location>
    <ligand>
        <name>Fe cation</name>
        <dbReference type="ChEBI" id="CHEBI:24875"/>
        <label>2</label>
    </ligand>
</feature>